<keyword id="KW-0968">Cytoplasmic vesicle</keyword>
<keyword id="KW-0333">Golgi apparatus</keyword>
<keyword id="KW-0472">Membrane</keyword>
<keyword id="KW-0653">Protein transport</keyword>
<keyword id="KW-1185">Reference proteome</keyword>
<keyword id="KW-0813">Transport</keyword>
<comment type="function">
    <text evidence="1">Part of the AP-3 complex, an adaptor-related complex which is not clathrin-associated. The complex is associated with the Golgi region as well as more peripheral structures. It facilitates the budding of vesicles from the Golgi membrane and may be directly involved in trafficking to lysosomes. In concert with the BLOC-1 complex, AP-3 is required to target cargos into vesicles assembled at cell bodies for delivery into neurites and nerve terminals (By similarity).</text>
</comment>
<comment type="subunit">
    <text evidence="1">Adaptor protein complex 3 (AP-3) is a heterotetramer composed of two large adaptins (delta-type subunit AP3D1 and beta-type subunit AP3B1 or AP3B2), a medium adaptin (mu-type subunit AP3M1 or AP3M2) and a small adaptin (sigma-type subunit APS1 or AP3S2). Interacts with AGAP1. AP-3 associates with the BLOC-1 complex (By similarity).</text>
</comment>
<comment type="subcellular location">
    <subcellularLocation>
        <location>Golgi apparatus</location>
    </subcellularLocation>
    <subcellularLocation>
        <location evidence="1">Cytoplasmic vesicle membrane</location>
        <topology evidence="1">Peripheral membrane protein</topology>
        <orientation evidence="1">Cytoplasmic side</orientation>
    </subcellularLocation>
    <text evidence="1">Component of the coat surrounding the cytoplasmic face of coated vesicles located at the Golgi complex.</text>
</comment>
<comment type="similarity">
    <text evidence="2">Belongs to the adaptor complexes small subunit family.</text>
</comment>
<gene>
    <name type="primary">AP3S2</name>
</gene>
<organism>
    <name type="scientific">Bos taurus</name>
    <name type="common">Bovine</name>
    <dbReference type="NCBI Taxonomy" id="9913"/>
    <lineage>
        <taxon>Eukaryota</taxon>
        <taxon>Metazoa</taxon>
        <taxon>Chordata</taxon>
        <taxon>Craniata</taxon>
        <taxon>Vertebrata</taxon>
        <taxon>Euteleostomi</taxon>
        <taxon>Mammalia</taxon>
        <taxon>Eutheria</taxon>
        <taxon>Laurasiatheria</taxon>
        <taxon>Artiodactyla</taxon>
        <taxon>Ruminantia</taxon>
        <taxon>Pecora</taxon>
        <taxon>Bovidae</taxon>
        <taxon>Bovinae</taxon>
        <taxon>Bos</taxon>
    </lineage>
</organism>
<accession>Q1JQA3</accession>
<dbReference type="EMBL" id="BC116115">
    <property type="protein sequence ID" value="AAI16116.1"/>
    <property type="molecule type" value="mRNA"/>
</dbReference>
<dbReference type="RefSeq" id="NP_001068844.1">
    <property type="nucleotide sequence ID" value="NM_001075376.1"/>
</dbReference>
<dbReference type="SMR" id="Q1JQA3"/>
<dbReference type="FunCoup" id="Q1JQA3">
    <property type="interactions" value="2765"/>
</dbReference>
<dbReference type="STRING" id="9913.ENSBTAP00000001846"/>
<dbReference type="BindingDB" id="Q1JQA3"/>
<dbReference type="PaxDb" id="9913-ENSBTAP00000001846"/>
<dbReference type="Ensembl" id="ENSBTAT00000001846.4">
    <property type="protein sequence ID" value="ENSBTAP00000001846.3"/>
    <property type="gene ID" value="ENSBTAG00000001407.5"/>
</dbReference>
<dbReference type="GeneID" id="508867"/>
<dbReference type="KEGG" id="bta:508867"/>
<dbReference type="CTD" id="10239"/>
<dbReference type="VEuPathDB" id="HostDB:ENSBTAG00000001407"/>
<dbReference type="VGNC" id="VGNC:53932">
    <property type="gene designation" value="AP3S2"/>
</dbReference>
<dbReference type="eggNOG" id="KOG0936">
    <property type="taxonomic scope" value="Eukaryota"/>
</dbReference>
<dbReference type="GeneTree" id="ENSGT00970000193421"/>
<dbReference type="HOGENOM" id="CLU_061221_2_2_1"/>
<dbReference type="InParanoid" id="Q1JQA3"/>
<dbReference type="OMA" id="MNDQGKP"/>
<dbReference type="OrthoDB" id="10261046at2759"/>
<dbReference type="TreeFam" id="TF300189"/>
<dbReference type="Proteomes" id="UP000009136">
    <property type="component" value="Chromosome 21"/>
</dbReference>
<dbReference type="Bgee" id="ENSBTAG00000001407">
    <property type="expression patterns" value="Expressed in choroid plexus and 106 other cell types or tissues"/>
</dbReference>
<dbReference type="GO" id="GO:0030123">
    <property type="term" value="C:AP-3 adaptor complex"/>
    <property type="evidence" value="ECO:0007669"/>
    <property type="project" value="Ensembl"/>
</dbReference>
<dbReference type="GO" id="GO:1904115">
    <property type="term" value="C:axon cytoplasm"/>
    <property type="evidence" value="ECO:0007669"/>
    <property type="project" value="GOC"/>
</dbReference>
<dbReference type="GO" id="GO:0030659">
    <property type="term" value="C:cytoplasmic vesicle membrane"/>
    <property type="evidence" value="ECO:0007669"/>
    <property type="project" value="UniProtKB-SubCell"/>
</dbReference>
<dbReference type="GO" id="GO:0005794">
    <property type="term" value="C:Golgi apparatus"/>
    <property type="evidence" value="ECO:0007669"/>
    <property type="project" value="UniProtKB-SubCell"/>
</dbReference>
<dbReference type="GO" id="GO:0043231">
    <property type="term" value="C:intracellular membrane-bounded organelle"/>
    <property type="evidence" value="ECO:0000318"/>
    <property type="project" value="GO_Central"/>
</dbReference>
<dbReference type="GO" id="GO:0008089">
    <property type="term" value="P:anterograde axonal transport"/>
    <property type="evidence" value="ECO:0000250"/>
    <property type="project" value="UniProtKB"/>
</dbReference>
<dbReference type="GO" id="GO:0048490">
    <property type="term" value="P:anterograde synaptic vesicle transport"/>
    <property type="evidence" value="ECO:0000250"/>
    <property type="project" value="UniProtKB"/>
</dbReference>
<dbReference type="GO" id="GO:0006896">
    <property type="term" value="P:Golgi to vacuole transport"/>
    <property type="evidence" value="ECO:0007669"/>
    <property type="project" value="InterPro"/>
</dbReference>
<dbReference type="GO" id="GO:0006886">
    <property type="term" value="P:intracellular protein transport"/>
    <property type="evidence" value="ECO:0007669"/>
    <property type="project" value="InterPro"/>
</dbReference>
<dbReference type="GO" id="GO:0016192">
    <property type="term" value="P:vesicle-mediated transport"/>
    <property type="evidence" value="ECO:0000318"/>
    <property type="project" value="GO_Central"/>
</dbReference>
<dbReference type="CDD" id="cd14834">
    <property type="entry name" value="AP3_sigma"/>
    <property type="match status" value="1"/>
</dbReference>
<dbReference type="FunFam" id="3.30.450.60:FF:000001">
    <property type="entry name" value="AP complex subunit sigma"/>
    <property type="match status" value="1"/>
</dbReference>
<dbReference type="Gene3D" id="3.30.450.60">
    <property type="match status" value="1"/>
</dbReference>
<dbReference type="InterPro" id="IPR016635">
    <property type="entry name" value="AP_complex_ssu"/>
</dbReference>
<dbReference type="InterPro" id="IPR022775">
    <property type="entry name" value="AP_mu_sigma_su"/>
</dbReference>
<dbReference type="InterPro" id="IPR027155">
    <property type="entry name" value="APS3"/>
</dbReference>
<dbReference type="InterPro" id="IPR000804">
    <property type="entry name" value="Clathrin_sm-chain_CS"/>
</dbReference>
<dbReference type="InterPro" id="IPR011012">
    <property type="entry name" value="Longin-like_dom_sf"/>
</dbReference>
<dbReference type="PANTHER" id="PTHR11753">
    <property type="entry name" value="ADAPTOR COMPLEXES SMALL SUBUNIT FAMILY"/>
    <property type="match status" value="1"/>
</dbReference>
<dbReference type="Pfam" id="PF01217">
    <property type="entry name" value="Clat_adaptor_s"/>
    <property type="match status" value="1"/>
</dbReference>
<dbReference type="SUPFAM" id="SSF64356">
    <property type="entry name" value="SNARE-like"/>
    <property type="match status" value="1"/>
</dbReference>
<dbReference type="PROSITE" id="PS00989">
    <property type="entry name" value="CLAT_ADAPTOR_S"/>
    <property type="match status" value="1"/>
</dbReference>
<evidence type="ECO:0000250" key="1"/>
<evidence type="ECO:0000305" key="2"/>
<name>AP3S2_BOVIN</name>
<reference key="1">
    <citation type="submission" date="2006-05" db="EMBL/GenBank/DDBJ databases">
        <authorList>
            <consortium name="NIH - Mammalian Gene Collection (MGC) project"/>
        </authorList>
    </citation>
    <scope>NUCLEOTIDE SEQUENCE [LARGE SCALE MRNA]</scope>
    <source>
        <strain>Hereford</strain>
        <tissue>Ascending colon</tissue>
    </source>
</reference>
<sequence>MIQAILVFNNHGKPRLVRFYQRFPEEIQQQIVRETFHLVLKRDDNICNFLEGGSLIGGSDYKLIYRHYATLYFVFCVDSSESELGILDLIQVFVETLDKCFENVCELDLIFHMDKVHYILQEVVMGGMVLETNMNEIVAQIEAQNRLEKSEGGLSAAPARAVSAVKNINLPEMPRNINIGDLNIKVPNLSQFV</sequence>
<proteinExistence type="evidence at transcript level"/>
<feature type="chain" id="PRO_0000283806" description="AP-3 complex subunit sigma-2">
    <location>
        <begin position="1"/>
        <end position="193"/>
    </location>
</feature>
<protein>
    <recommendedName>
        <fullName>AP-3 complex subunit sigma-2</fullName>
    </recommendedName>
    <alternativeName>
        <fullName>AP-3 complex subunit sigma-3B</fullName>
    </alternativeName>
    <alternativeName>
        <fullName>Adaptor-related protein complex 3 subunit sigma-2</fullName>
    </alternativeName>
    <alternativeName>
        <fullName>Sigma-3B-adaptin</fullName>
        <shortName>Sigma3B-adaptin</shortName>
    </alternativeName>
    <alternativeName>
        <fullName>Sigma-adaptin 3b</fullName>
    </alternativeName>
</protein>